<feature type="chain" id="PRO_0000049961" description="Uncharacterized protein YwcH">
    <location>
        <begin position="1"/>
        <end position="333"/>
    </location>
</feature>
<protein>
    <recommendedName>
        <fullName>Uncharacterized protein YwcH</fullName>
    </recommendedName>
</protein>
<evidence type="ECO:0000305" key="1"/>
<name>YWCH_BACSU</name>
<sequence>MVSLSILDQSPVSEGSNAETALQQTVALAQAAEDLGYKRFWVSEHHFSKRLAGSSPEVLISHIAAKTKRIRVGSGGVMLPHYSAYKVAENFRVLEGLTPGRIDLGLGRAPGGMPIASWALNDGGKRNADQYPQQIKELTMYLHDLADDKHRFPNLTAAPHISTAPDVWLLGSSGESALLAAESGAGYMFAHFINGEGGEGTVRQYKRRFKPSVLGDTPRAAVAVFVLCADTEEKAEELGAVLDFTLLAGEQGIPLEGVPSYEAVRKNTYSPYEQRRIADNRNRMIVGTKEQVKERLLALSNAYETEEIMVVTITHHFEDKLRSYRLLQEAFAD</sequence>
<reference key="1">
    <citation type="journal article" date="1993" name="Mol. Microbiol.">
        <title>Bacillus subtilis genome project: cloning and sequencing of the 97 kb region from 325 degrees to 333 degrees.</title>
        <authorList>
            <person name="Glaser P."/>
            <person name="Kunst F."/>
            <person name="Arnaud M."/>
            <person name="Coudart M.P."/>
            <person name="Gonzales W."/>
            <person name="Hullo M.-F."/>
            <person name="Ionescu M."/>
            <person name="Lubochinsky B."/>
            <person name="Marcelino L."/>
            <person name="Moszer I."/>
            <person name="Presecan E."/>
            <person name="Santana M."/>
            <person name="Schneider E."/>
            <person name="Schweizer J."/>
            <person name="Vertes A."/>
            <person name="Rapoport G."/>
            <person name="Danchin A."/>
        </authorList>
    </citation>
    <scope>NUCLEOTIDE SEQUENCE [GENOMIC DNA]</scope>
    <source>
        <strain>168</strain>
    </source>
</reference>
<reference key="2">
    <citation type="journal article" date="1997" name="Nature">
        <title>The complete genome sequence of the Gram-positive bacterium Bacillus subtilis.</title>
        <authorList>
            <person name="Kunst F."/>
            <person name="Ogasawara N."/>
            <person name="Moszer I."/>
            <person name="Albertini A.M."/>
            <person name="Alloni G."/>
            <person name="Azevedo V."/>
            <person name="Bertero M.G."/>
            <person name="Bessieres P."/>
            <person name="Bolotin A."/>
            <person name="Borchert S."/>
            <person name="Borriss R."/>
            <person name="Boursier L."/>
            <person name="Brans A."/>
            <person name="Braun M."/>
            <person name="Brignell S.C."/>
            <person name="Bron S."/>
            <person name="Brouillet S."/>
            <person name="Bruschi C.V."/>
            <person name="Caldwell B."/>
            <person name="Capuano V."/>
            <person name="Carter N.M."/>
            <person name="Choi S.-K."/>
            <person name="Codani J.-J."/>
            <person name="Connerton I.F."/>
            <person name="Cummings N.J."/>
            <person name="Daniel R.A."/>
            <person name="Denizot F."/>
            <person name="Devine K.M."/>
            <person name="Duesterhoeft A."/>
            <person name="Ehrlich S.D."/>
            <person name="Emmerson P.T."/>
            <person name="Entian K.-D."/>
            <person name="Errington J."/>
            <person name="Fabret C."/>
            <person name="Ferrari E."/>
            <person name="Foulger D."/>
            <person name="Fritz C."/>
            <person name="Fujita M."/>
            <person name="Fujita Y."/>
            <person name="Fuma S."/>
            <person name="Galizzi A."/>
            <person name="Galleron N."/>
            <person name="Ghim S.-Y."/>
            <person name="Glaser P."/>
            <person name="Goffeau A."/>
            <person name="Golightly E.J."/>
            <person name="Grandi G."/>
            <person name="Guiseppi G."/>
            <person name="Guy B.J."/>
            <person name="Haga K."/>
            <person name="Haiech J."/>
            <person name="Harwood C.R."/>
            <person name="Henaut A."/>
            <person name="Hilbert H."/>
            <person name="Holsappel S."/>
            <person name="Hosono S."/>
            <person name="Hullo M.-F."/>
            <person name="Itaya M."/>
            <person name="Jones L.-M."/>
            <person name="Joris B."/>
            <person name="Karamata D."/>
            <person name="Kasahara Y."/>
            <person name="Klaerr-Blanchard M."/>
            <person name="Klein C."/>
            <person name="Kobayashi Y."/>
            <person name="Koetter P."/>
            <person name="Koningstein G."/>
            <person name="Krogh S."/>
            <person name="Kumano M."/>
            <person name="Kurita K."/>
            <person name="Lapidus A."/>
            <person name="Lardinois S."/>
            <person name="Lauber J."/>
            <person name="Lazarevic V."/>
            <person name="Lee S.-M."/>
            <person name="Levine A."/>
            <person name="Liu H."/>
            <person name="Masuda S."/>
            <person name="Mauel C."/>
            <person name="Medigue C."/>
            <person name="Medina N."/>
            <person name="Mellado R.P."/>
            <person name="Mizuno M."/>
            <person name="Moestl D."/>
            <person name="Nakai S."/>
            <person name="Noback M."/>
            <person name="Noone D."/>
            <person name="O'Reilly M."/>
            <person name="Ogawa K."/>
            <person name="Ogiwara A."/>
            <person name="Oudega B."/>
            <person name="Park S.-H."/>
            <person name="Parro V."/>
            <person name="Pohl T.M."/>
            <person name="Portetelle D."/>
            <person name="Porwollik S."/>
            <person name="Prescott A.M."/>
            <person name="Presecan E."/>
            <person name="Pujic P."/>
            <person name="Purnelle B."/>
            <person name="Rapoport G."/>
            <person name="Rey M."/>
            <person name="Reynolds S."/>
            <person name="Rieger M."/>
            <person name="Rivolta C."/>
            <person name="Rocha E."/>
            <person name="Roche B."/>
            <person name="Rose M."/>
            <person name="Sadaie Y."/>
            <person name="Sato T."/>
            <person name="Scanlan E."/>
            <person name="Schleich S."/>
            <person name="Schroeter R."/>
            <person name="Scoffone F."/>
            <person name="Sekiguchi J."/>
            <person name="Sekowska A."/>
            <person name="Seror S.J."/>
            <person name="Serror P."/>
            <person name="Shin B.-S."/>
            <person name="Soldo B."/>
            <person name="Sorokin A."/>
            <person name="Tacconi E."/>
            <person name="Takagi T."/>
            <person name="Takahashi H."/>
            <person name="Takemaru K."/>
            <person name="Takeuchi M."/>
            <person name="Tamakoshi A."/>
            <person name="Tanaka T."/>
            <person name="Terpstra P."/>
            <person name="Tognoni A."/>
            <person name="Tosato V."/>
            <person name="Uchiyama S."/>
            <person name="Vandenbol M."/>
            <person name="Vannier F."/>
            <person name="Vassarotti A."/>
            <person name="Viari A."/>
            <person name="Wambutt R."/>
            <person name="Wedler E."/>
            <person name="Wedler H."/>
            <person name="Weitzenegger T."/>
            <person name="Winters P."/>
            <person name="Wipat A."/>
            <person name="Yamamoto H."/>
            <person name="Yamane K."/>
            <person name="Yasumoto K."/>
            <person name="Yata K."/>
            <person name="Yoshida K."/>
            <person name="Yoshikawa H.-F."/>
            <person name="Zumstein E."/>
            <person name="Yoshikawa H."/>
            <person name="Danchin A."/>
        </authorList>
    </citation>
    <scope>NUCLEOTIDE SEQUENCE [LARGE SCALE GENOMIC DNA]</scope>
    <source>
        <strain>168</strain>
    </source>
</reference>
<organism>
    <name type="scientific">Bacillus subtilis (strain 168)</name>
    <dbReference type="NCBI Taxonomy" id="224308"/>
    <lineage>
        <taxon>Bacteria</taxon>
        <taxon>Bacillati</taxon>
        <taxon>Bacillota</taxon>
        <taxon>Bacilli</taxon>
        <taxon>Bacillales</taxon>
        <taxon>Bacillaceae</taxon>
        <taxon>Bacillus</taxon>
    </lineage>
</organism>
<dbReference type="EMBL" id="X73124">
    <property type="protein sequence ID" value="CAA51600.1"/>
    <property type="molecule type" value="Genomic_DNA"/>
</dbReference>
<dbReference type="EMBL" id="AL009126">
    <property type="protein sequence ID" value="CAB15836.1"/>
    <property type="molecule type" value="Genomic_DNA"/>
</dbReference>
<dbReference type="PIR" id="S39699">
    <property type="entry name" value="S39699"/>
</dbReference>
<dbReference type="RefSeq" id="NP_391689.1">
    <property type="nucleotide sequence ID" value="NC_000964.3"/>
</dbReference>
<dbReference type="RefSeq" id="WP_003244349.1">
    <property type="nucleotide sequence ID" value="NZ_OZ025638.1"/>
</dbReference>
<dbReference type="SMR" id="P39606"/>
<dbReference type="FunCoup" id="P39606">
    <property type="interactions" value="107"/>
</dbReference>
<dbReference type="STRING" id="224308.BSU38100"/>
<dbReference type="PaxDb" id="224308-BSU38100"/>
<dbReference type="EnsemblBacteria" id="CAB15836">
    <property type="protein sequence ID" value="CAB15836"/>
    <property type="gene ID" value="BSU_38100"/>
</dbReference>
<dbReference type="GeneID" id="937286"/>
<dbReference type="KEGG" id="bsu:BSU38100"/>
<dbReference type="PATRIC" id="fig|224308.179.peg.4124"/>
<dbReference type="eggNOG" id="COG2141">
    <property type="taxonomic scope" value="Bacteria"/>
</dbReference>
<dbReference type="InParanoid" id="P39606"/>
<dbReference type="OrthoDB" id="9780518at2"/>
<dbReference type="PhylomeDB" id="P39606"/>
<dbReference type="BioCyc" id="BSUB:BSU38100-MONOMER"/>
<dbReference type="Proteomes" id="UP000001570">
    <property type="component" value="Chromosome"/>
</dbReference>
<dbReference type="GO" id="GO:0005829">
    <property type="term" value="C:cytosol"/>
    <property type="evidence" value="ECO:0000318"/>
    <property type="project" value="GO_Central"/>
</dbReference>
<dbReference type="GO" id="GO:0016705">
    <property type="term" value="F:oxidoreductase activity, acting on paired donors, with incorporation or reduction of molecular oxygen"/>
    <property type="evidence" value="ECO:0007669"/>
    <property type="project" value="InterPro"/>
</dbReference>
<dbReference type="CDD" id="cd00347">
    <property type="entry name" value="Flavin_utilizing_monoxygenases"/>
    <property type="match status" value="1"/>
</dbReference>
<dbReference type="FunFam" id="3.20.20.30:FF:000002">
    <property type="entry name" value="LLM class flavin-dependent oxidoreductase"/>
    <property type="match status" value="1"/>
</dbReference>
<dbReference type="Gene3D" id="3.20.20.30">
    <property type="entry name" value="Luciferase-like domain"/>
    <property type="match status" value="1"/>
</dbReference>
<dbReference type="InterPro" id="IPR050766">
    <property type="entry name" value="Bact_Lucif_Oxidored"/>
</dbReference>
<dbReference type="InterPro" id="IPR019949">
    <property type="entry name" value="CmoO-like"/>
</dbReference>
<dbReference type="InterPro" id="IPR011251">
    <property type="entry name" value="Luciferase-like_dom"/>
</dbReference>
<dbReference type="InterPro" id="IPR036661">
    <property type="entry name" value="Luciferase-like_sf"/>
</dbReference>
<dbReference type="NCBIfam" id="TIGR03558">
    <property type="entry name" value="oxido_grp_1"/>
    <property type="match status" value="1"/>
</dbReference>
<dbReference type="PANTHER" id="PTHR30137">
    <property type="entry name" value="LUCIFERASE-LIKE MONOOXYGENASE"/>
    <property type="match status" value="1"/>
</dbReference>
<dbReference type="PANTHER" id="PTHR30137:SF19">
    <property type="entry name" value="LUCIFERASE-LIKE MONOOXYGENASE"/>
    <property type="match status" value="1"/>
</dbReference>
<dbReference type="Pfam" id="PF00296">
    <property type="entry name" value="Bac_luciferase"/>
    <property type="match status" value="1"/>
</dbReference>
<dbReference type="SUPFAM" id="SSF51679">
    <property type="entry name" value="Bacterial luciferase-like"/>
    <property type="match status" value="1"/>
</dbReference>
<gene>
    <name type="primary">ywcH</name>
    <name type="ordered locus">BSU38100</name>
    <name type="ORF">ipa-44d</name>
</gene>
<proteinExistence type="predicted"/>
<keyword id="KW-1185">Reference proteome</keyword>
<accession>P39606</accession>
<comment type="similarity">
    <text evidence="1">To bacterial alkanal monooxygenase alpha and beta chains.</text>
</comment>